<protein>
    <recommendedName>
        <fullName evidence="1">UPF0502 protein RALTA_B0914</fullName>
    </recommendedName>
</protein>
<dbReference type="EMBL" id="CU633750">
    <property type="protein sequence ID" value="CAQ71527.1"/>
    <property type="molecule type" value="Genomic_DNA"/>
</dbReference>
<dbReference type="RefSeq" id="WP_012355747.1">
    <property type="nucleotide sequence ID" value="NC_010530.1"/>
</dbReference>
<dbReference type="SMR" id="B3R9F2"/>
<dbReference type="GeneID" id="29765521"/>
<dbReference type="KEGG" id="cti:RALTA_B0914"/>
<dbReference type="eggNOG" id="COG3132">
    <property type="taxonomic scope" value="Bacteria"/>
</dbReference>
<dbReference type="HOGENOM" id="CLU_057831_0_0_4"/>
<dbReference type="BioCyc" id="CTAI977880:RALTA_RS20120-MONOMER"/>
<dbReference type="Proteomes" id="UP000001692">
    <property type="component" value="Chromosome 2"/>
</dbReference>
<dbReference type="Gene3D" id="1.10.10.10">
    <property type="entry name" value="Winged helix-like DNA-binding domain superfamily/Winged helix DNA-binding domain"/>
    <property type="match status" value="2"/>
</dbReference>
<dbReference type="HAMAP" id="MF_01584">
    <property type="entry name" value="UPF0502"/>
    <property type="match status" value="1"/>
</dbReference>
<dbReference type="InterPro" id="IPR007432">
    <property type="entry name" value="DUF480"/>
</dbReference>
<dbReference type="InterPro" id="IPR036388">
    <property type="entry name" value="WH-like_DNA-bd_sf"/>
</dbReference>
<dbReference type="InterPro" id="IPR036390">
    <property type="entry name" value="WH_DNA-bd_sf"/>
</dbReference>
<dbReference type="PANTHER" id="PTHR38768">
    <property type="entry name" value="UPF0502 PROTEIN YCEH"/>
    <property type="match status" value="1"/>
</dbReference>
<dbReference type="PANTHER" id="PTHR38768:SF1">
    <property type="entry name" value="UPF0502 PROTEIN YCEH"/>
    <property type="match status" value="1"/>
</dbReference>
<dbReference type="Pfam" id="PF04337">
    <property type="entry name" value="DUF480"/>
    <property type="match status" value="1"/>
</dbReference>
<dbReference type="SUPFAM" id="SSF46785">
    <property type="entry name" value="Winged helix' DNA-binding domain"/>
    <property type="match status" value="2"/>
</dbReference>
<name>Y6014_CUPTR</name>
<comment type="similarity">
    <text evidence="1">Belongs to the UPF0502 family.</text>
</comment>
<reference key="1">
    <citation type="journal article" date="2008" name="Genome Res.">
        <title>Genome sequence of the beta-rhizobium Cupriavidus taiwanensis and comparative genomics of rhizobia.</title>
        <authorList>
            <person name="Amadou C."/>
            <person name="Pascal G."/>
            <person name="Mangenot S."/>
            <person name="Glew M."/>
            <person name="Bontemps C."/>
            <person name="Capela D."/>
            <person name="Carrere S."/>
            <person name="Cruveiller S."/>
            <person name="Dossat C."/>
            <person name="Lajus A."/>
            <person name="Marchetti M."/>
            <person name="Poinsot V."/>
            <person name="Rouy Z."/>
            <person name="Servin B."/>
            <person name="Saad M."/>
            <person name="Schenowitz C."/>
            <person name="Barbe V."/>
            <person name="Batut J."/>
            <person name="Medigue C."/>
            <person name="Masson-Boivin C."/>
        </authorList>
    </citation>
    <scope>NUCLEOTIDE SEQUENCE [LARGE SCALE GENOMIC DNA]</scope>
    <source>
        <strain>DSM 17343 / BCRC 17206 / CCUG 44338 / CIP 107171 / LMG 19424 / R1</strain>
    </source>
</reference>
<feature type="chain" id="PRO_1000201238" description="UPF0502 protein RALTA_B0914">
    <location>
        <begin position="1"/>
        <end position="243"/>
    </location>
</feature>
<feature type="region of interest" description="Disordered" evidence="2">
    <location>
        <begin position="1"/>
        <end position="23"/>
    </location>
</feature>
<feature type="compositionally biased region" description="Polar residues" evidence="2">
    <location>
        <begin position="1"/>
        <end position="10"/>
    </location>
</feature>
<gene>
    <name type="ordered locus">RALTA_B0914</name>
</gene>
<proteinExistence type="inferred from homology"/>
<evidence type="ECO:0000255" key="1">
    <source>
        <dbReference type="HAMAP-Rule" id="MF_01584"/>
    </source>
</evidence>
<evidence type="ECO:0000256" key="2">
    <source>
        <dbReference type="SAM" id="MobiDB-lite"/>
    </source>
</evidence>
<sequence length="243" mass="25969">MPSTPESDPTQPGDRPARPALRPLTPVEGRVLGVLVEKQHTVPDTYPLSLNALASGCNQKTARAPVMNVSEAEILEAIDGLKSLSLVFEGSSSRVPRFEHNMQRALGIPSQSVALLALLLLRGPQTAAELRLNTARLHSFADISSVEAFLDELASQTPPRVVRLPRAPGARENRWMHLLSGEAGAAVAAEESARNTDGDAAPSAELEQLRTEQQALAEKVARLQGLVEHMAAQLGISADEFLG</sequence>
<accession>B3R9F2</accession>
<organism>
    <name type="scientific">Cupriavidus taiwanensis (strain DSM 17343 / BCRC 17206 / CCUG 44338 / CIP 107171 / LMG 19424 / R1)</name>
    <name type="common">Ralstonia taiwanensis (strain LMG 19424)</name>
    <dbReference type="NCBI Taxonomy" id="977880"/>
    <lineage>
        <taxon>Bacteria</taxon>
        <taxon>Pseudomonadati</taxon>
        <taxon>Pseudomonadota</taxon>
        <taxon>Betaproteobacteria</taxon>
        <taxon>Burkholderiales</taxon>
        <taxon>Burkholderiaceae</taxon>
        <taxon>Cupriavidus</taxon>
    </lineage>
</organism>